<gene>
    <name type="primary">P</name>
</gene>
<comment type="function">
    <text evidence="2 9 10 11 15">Essential cofactor of the RNA polymerase L that plays a central role in the transcription and replication by forming the polymerase complex with RNA polymerase L and recruiting L to the genomic N-RNA template for RNA synthesis (Probable). Also plays a central role in the encapsidation of nascent RNA chains by forming the encapsidation complex with the nucleocapsid protein N (N-P complex) (By similarity). Acts as a chaperone for newly synthesized free N protein, so-called N0, allowing encapsidation of nascent RNA chains during replication (PubMed:26719278). The nucleoprotein protein N prevents excessive phosphorylation of P, which leads to down-regulation of viral transcription/ replication (PubMed:23022562). Participates, together with N, in the formation of viral factories (viroplasms), which are large inclusions in the host cytoplasm where replication takes place (PubMed:31375591).</text>
</comment>
<comment type="subunit">
    <text evidence="4 5 10 14">Homotetramer (By similarity). Interacts (via multimerization domain and XD domain) with polymerase L; this interaction forms the polymerase L-P complex (By similarity). Interacts (via N-terminus) with N0 (via Ncore); this interaction allows P to chaperon N0 to avoid N polymerization and non-specific RNA binding before encapsidation (PubMed:26719278). Interacts (via C-terminus) with N-RNA template (via Ntail); this interaction maintains the P/L complex anchored to the nucleocapsid template during the sequential transcription (Probable). Interacts (via C-terminus) with protein C this interaction allows C to associate with the ribonucleocapsid (By similarity).</text>
</comment>
<comment type="interaction">
    <interactant intactId="EBI-21943616">
        <id>Q77M42</id>
    </interactant>
    <interactant intactId="EBI-21943629">
        <id>Q77M43</id>
        <label>N</label>
    </interactant>
    <organismsDiffer>false</organismsDiffer>
    <experiments>2</experiments>
</comment>
<comment type="domain">
    <text evidence="1 2 4 7 8">The N-terminus consists of a long intrinsically disordered tail. The central part contains the coiled-coil multimerization domain (MD) (By similarity). Forms a four-stranded coiled coil structure (By similarity). The C-terminus constitutes the alpha-helical domain (XD) that binds to the nucleocapsid (N-RNA complex) (PubMed:15159535, PubMed:15280472).</text>
</comment>
<comment type="PTM">
    <text evidence="11">Phosphorylation on serines by host CK2 is necessary for the formation of viral factories.</text>
</comment>
<comment type="RNA editing">
    <location>
        <position position="231" evidence="3"/>
    </location>
    <text evidence="3">Partially edited. RNA editing at this position consists of an insertion of one guanine nucleotide. The sequence displayed here is the P protein, derived from the unedited RNA. The edited RNA gives rise to the V protein (AC Q77M41).</text>
</comment>
<comment type="similarity">
    <text evidence="13">Belongs to the morbillivirus P protein family.</text>
</comment>
<sequence>MAEEQARHVKNGLECIRALKAEPIGSLAIEEAMAAWSEISDNPGQERATCREEKAGSSGLSKPCLSAIGSTEGGAPRIRGQGPGESDDDAETLGIPPRNLQASSTGLQCYYVYDHSGEAVKGIQDADSIMVQSGLDGDSTLSGGDNESENSDVDIGEPDTEGYAITDRGSAPISMGFRASDVETAEGGEIHELLRLQSRGNNFPKLGKTLNVPPPPDPGRASTSGTPIKKGTDARLASFGTEIASLLTGGATQCARKSPSEPSGPGAPAGNVPECVSNAALIQEWTPESGTTISPRSQNNEEGGDYYDDELFSDVQDIKTALAKIHEDNQKIISKLESLLLLKGEVESIKKQINRQNISISTLEGHLSSIMIAIPGLGKDPNDPTADVEINPDLKPIIGRDSGRALAEVLKKPVASRQLQGMTNGRTSSRGQLLKEFQLKPIGKKMSSAVGFVPDTGPASRSVIRSIIKSSRLEEDRKRYLMTLLDDIKGANDLAKFHQMLMKIIMK</sequence>
<reference key="1">
    <citation type="journal article" date="2001" name="J. Virol.">
        <title>Comparison of predicted amino acid sequences of measles virus strains in the Edmonston vaccine lineage.</title>
        <authorList>
            <person name="Parks C.L."/>
            <person name="Lerch R.A."/>
            <person name="Walpita P."/>
            <person name="Wang H.P."/>
            <person name="Sidhu M.S."/>
            <person name="Udem S.A."/>
        </authorList>
    </citation>
    <scope>NUCLEOTIDE SEQUENCE [GENOMIC DNA]</scope>
</reference>
<reference key="2">
    <citation type="journal article" date="1995" name="Virology">
        <title>Involvement of cellular casein kinase II in the phosphorylation of measles virus P protein: identification of phosphorylation sites.</title>
        <authorList>
            <person name="Das T."/>
            <person name="Schuster A."/>
            <person name="Schneider-Schaulies S."/>
            <person name="Banerjee A.K."/>
        </authorList>
    </citation>
    <scope>PHOSPHORYLATION AT SER-86 AND SER-151</scope>
</reference>
<reference key="3">
    <citation type="journal article" date="2004" name="J. Virol.">
        <title>Characterization of nucleocapsid binding by the measles virus and mumps virus phosphoproteins.</title>
        <authorList>
            <person name="Kingston R.L."/>
            <person name="Baase W.A."/>
            <person name="Gay L.S."/>
        </authorList>
    </citation>
    <scope>INTERACTION WITH THE NUCLEOPROTEIN</scope>
    <scope>DOMAIN</scope>
</reference>
<reference key="4">
    <citation type="journal article" date="2012" name="FEBS Lett.">
        <title>Phosphorylation of measles virus phosphoprotein at S86 and/or S151 downregulates viral transcriptional activity.</title>
        <authorList>
            <person name="Sugai A."/>
            <person name="Sato H."/>
            <person name="Yoneda M."/>
            <person name="Kai C."/>
        </authorList>
    </citation>
    <scope>PHOSPHORYLATION AT SER-86 AND SER-151</scope>
    <scope>FUNCTION</scope>
    <source>
        <strain>HL</strain>
    </source>
</reference>
<reference key="5">
    <citation type="journal article" date="2019" name="J. Virol.">
        <title>Measles Virus Forms Inclusion Bodies with Properties of Liquid Organelles.</title>
        <authorList>
            <person name="Zhou Y."/>
            <person name="Su J.M."/>
            <person name="Samuel C.E."/>
            <person name="Ma D."/>
        </authorList>
    </citation>
    <scope>FUNCTION</scope>
    <scope>PHOSPHORYLATION AT SER-86 AND SER-151</scope>
    <scope>MUTAGENESIS OF SER-86 AND SER-151</scope>
</reference>
<reference evidence="17" key="6">
    <citation type="journal article" date="2004" name="Proc. Natl. Acad. Sci. U.S.A.">
        <title>Structural basis for the attachment of a paramyxoviral polymerase to its template.</title>
        <authorList>
            <person name="Kingston R.L."/>
            <person name="Hamel D.J."/>
            <person name="Gay L.S."/>
            <person name="Dahlquist F.W."/>
            <person name="Matthews B.W."/>
        </authorList>
    </citation>
    <scope>X-RAY CRYSTALLOGRAPHY (2.00 ANGSTROMS) OF 457-507 IN COMPLEX WITH THE NUCLEOPROTEIN</scope>
    <scope>INTERACTION WITH THE NUCLEOPROTEIN</scope>
    <scope>DOMAIN</scope>
</reference>
<reference evidence="18" key="7">
    <citation type="journal article" date="2015" name="J. Virol.">
        <title>Crystal Structure of the Measles Virus Nucleoprotein Core in Complex with an N-Terminal Region of Phosphoprotein.</title>
        <authorList>
            <person name="Guryanov S.G."/>
            <person name="Liljeroos L."/>
            <person name="Kasaragod P."/>
            <person name="Kajander T."/>
            <person name="Butcher S.J."/>
        </authorList>
    </citation>
    <scope>X-RAY CRYSTALLOGRAPHY (2.71 ANGSTROMS) OF 1-48 IN COMPLEX WITH THE NUCLEOPROTEIN</scope>
    <scope>INTERACTION WITH THE NUCLEOPROTEIN</scope>
    <scope>FUNCTION</scope>
</reference>
<organismHost>
    <name type="scientific">Homo sapiens</name>
    <name type="common">Human</name>
    <dbReference type="NCBI Taxonomy" id="9606"/>
</organismHost>
<proteinExistence type="evidence at protein level"/>
<keyword id="KW-0002">3D-structure</keyword>
<keyword id="KW-0597">Phosphoprotein</keyword>
<keyword id="KW-0691">RNA editing</keyword>
<keyword id="KW-0693">Viral RNA replication</keyword>
<name>PHOSP_MEASM</name>
<feature type="chain" id="PRO_0000459166" description="Phosphoprotein">
    <location>
        <begin position="1"/>
        <end position="507"/>
    </location>
</feature>
<feature type="region of interest" description="Interaction with N0" evidence="10">
    <location>
        <begin position="1"/>
        <end position="48"/>
    </location>
</feature>
<feature type="region of interest" description="Disordered" evidence="6">
    <location>
        <begin position="41"/>
        <end position="99"/>
    </location>
</feature>
<feature type="region of interest" description="Disordered" evidence="6">
    <location>
        <begin position="134"/>
        <end position="163"/>
    </location>
</feature>
<feature type="region of interest" description="Disordered" evidence="6">
    <location>
        <begin position="201"/>
        <end position="230"/>
    </location>
</feature>
<feature type="region of interest" description="Disordered" evidence="6">
    <location>
        <begin position="252"/>
        <end position="273"/>
    </location>
</feature>
<feature type="region of interest" description="Multimerization" evidence="12">
    <location>
        <begin position="304"/>
        <end position="376"/>
    </location>
</feature>
<feature type="region of interest" description="Interaction with the L polymerase" evidence="5">
    <location>
        <begin position="361"/>
        <end position="377"/>
    </location>
</feature>
<feature type="region of interest" description="Interaction with the L polymerase" evidence="5">
    <location>
        <begin position="396"/>
        <end position="410"/>
    </location>
</feature>
<feature type="region of interest" description="X domain (XD)" evidence="5">
    <location>
        <begin position="457"/>
        <end position="507"/>
    </location>
</feature>
<feature type="region of interest" description="Interaction with the nucleocapsid (N-RNA)" evidence="7 8">
    <location>
        <begin position="459"/>
        <end position="507"/>
    </location>
</feature>
<feature type="compositionally biased region" description="Low complexity" evidence="6">
    <location>
        <begin position="134"/>
        <end position="145"/>
    </location>
</feature>
<feature type="compositionally biased region" description="Acidic residues" evidence="6">
    <location>
        <begin position="146"/>
        <end position="160"/>
    </location>
</feature>
<feature type="compositionally biased region" description="Low complexity" evidence="6">
    <location>
        <begin position="260"/>
        <end position="270"/>
    </location>
</feature>
<feature type="modified residue" description="Phosphoserine; by host CK2" evidence="9 16">
    <location>
        <position position="86"/>
    </location>
</feature>
<feature type="modified residue" description="Phosphoserine; by host CK2" evidence="9 16">
    <location>
        <position position="151"/>
    </location>
</feature>
<feature type="mutagenesis site" description="Loss of formation of viral factories; when associated with A-151." evidence="11">
    <original>S</original>
    <variation>A</variation>
    <location>
        <position position="86"/>
    </location>
</feature>
<feature type="mutagenesis site" description="Loss of formation of viral factories; when associated with A-86." evidence="11">
    <original>S</original>
    <variation>A</variation>
    <location>
        <position position="151"/>
    </location>
</feature>
<feature type="helix" evidence="20">
    <location>
        <begin position="1"/>
        <end position="20"/>
    </location>
</feature>
<feature type="helix" evidence="20">
    <location>
        <begin position="26"/>
        <end position="37"/>
    </location>
</feature>
<feature type="helix" evidence="19">
    <location>
        <begin position="461"/>
        <end position="470"/>
    </location>
</feature>
<feature type="helix" evidence="19">
    <location>
        <begin position="475"/>
        <end position="487"/>
    </location>
</feature>
<feature type="helix" evidence="19">
    <location>
        <begin position="491"/>
        <end position="505"/>
    </location>
</feature>
<evidence type="ECO:0000250" key="1">
    <source>
        <dbReference type="UniProtKB" id="P04859"/>
    </source>
</evidence>
<evidence type="ECO:0000250" key="2">
    <source>
        <dbReference type="UniProtKB" id="P06162"/>
    </source>
</evidence>
<evidence type="ECO:0000250" key="3">
    <source>
        <dbReference type="UniProtKB" id="P35974"/>
    </source>
</evidence>
<evidence type="ECO:0000250" key="4">
    <source>
        <dbReference type="UniProtKB" id="Q83623"/>
    </source>
</evidence>
<evidence type="ECO:0000250" key="5">
    <source>
        <dbReference type="UniProtKB" id="Q9WMB4"/>
    </source>
</evidence>
<evidence type="ECO:0000256" key="6">
    <source>
        <dbReference type="SAM" id="MobiDB-lite"/>
    </source>
</evidence>
<evidence type="ECO:0000269" key="7">
    <source>
    </source>
</evidence>
<evidence type="ECO:0000269" key="8">
    <source>
    </source>
</evidence>
<evidence type="ECO:0000269" key="9">
    <source>
    </source>
</evidence>
<evidence type="ECO:0000269" key="10">
    <source>
    </source>
</evidence>
<evidence type="ECO:0000269" key="11">
    <source>
    </source>
</evidence>
<evidence type="ECO:0000303" key="12">
    <source>
    </source>
</evidence>
<evidence type="ECO:0000305" key="13"/>
<evidence type="ECO:0000305" key="14">
    <source>
    </source>
</evidence>
<evidence type="ECO:0000305" key="15">
    <source>
    </source>
</evidence>
<evidence type="ECO:0000305" key="16">
    <source>
    </source>
</evidence>
<evidence type="ECO:0007744" key="17">
    <source>
        <dbReference type="PDB" id="1T6O"/>
    </source>
</evidence>
<evidence type="ECO:0007744" key="18">
    <source>
        <dbReference type="PDB" id="5E4V"/>
    </source>
</evidence>
<evidence type="ECO:0007829" key="19">
    <source>
        <dbReference type="PDB" id="1T6O"/>
    </source>
</evidence>
<evidence type="ECO:0007829" key="20">
    <source>
        <dbReference type="PDB" id="5E4V"/>
    </source>
</evidence>
<organism>
    <name type="scientific">Measles virus (strain Edmonston-Moraten vaccine)</name>
    <name type="common">MeV</name>
    <name type="synonym">Subacute sclerose panencephalitis virus</name>
    <dbReference type="NCBI Taxonomy" id="132484"/>
    <lineage>
        <taxon>Viruses</taxon>
        <taxon>Riboviria</taxon>
        <taxon>Orthornavirae</taxon>
        <taxon>Negarnaviricota</taxon>
        <taxon>Haploviricotina</taxon>
        <taxon>Monjiviricetes</taxon>
        <taxon>Mononegavirales</taxon>
        <taxon>Paramyxoviridae</taxon>
        <taxon>Orthoparamyxovirinae</taxon>
        <taxon>Morbillivirus</taxon>
        <taxon>Morbillivirus hominis</taxon>
        <taxon>Measles morbillivirus</taxon>
    </lineage>
</organism>
<dbReference type="EMBL" id="AF266287">
    <property type="protein sequence ID" value="AAF85668.1"/>
    <property type="molecule type" value="Genomic_RNA"/>
</dbReference>
<dbReference type="PDB" id="1T6O">
    <property type="method" value="X-ray"/>
    <property type="resolution" value="2.00 A"/>
    <property type="chains" value="A=457-507"/>
</dbReference>
<dbReference type="PDB" id="5E4V">
    <property type="method" value="X-ray"/>
    <property type="resolution" value="2.71 A"/>
    <property type="chains" value="A=1-48"/>
</dbReference>
<dbReference type="PDBsum" id="1T6O"/>
<dbReference type="PDBsum" id="5E4V"/>
<dbReference type="SMR" id="Q77M42"/>
<dbReference type="IntAct" id="Q77M42">
    <property type="interactions" value="1"/>
</dbReference>
<dbReference type="iPTMnet" id="Q77M42"/>
<dbReference type="EvolutionaryTrace" id="Q77M42"/>
<dbReference type="Proteomes" id="UP000154340">
    <property type="component" value="Genome"/>
</dbReference>
<dbReference type="GO" id="GO:0003723">
    <property type="term" value="F:RNA binding"/>
    <property type="evidence" value="ECO:0007669"/>
    <property type="project" value="InterPro"/>
</dbReference>
<dbReference type="GO" id="GO:0003968">
    <property type="term" value="F:RNA-directed RNA polymerase activity"/>
    <property type="evidence" value="ECO:0007669"/>
    <property type="project" value="InterPro"/>
</dbReference>
<dbReference type="GO" id="GO:0006351">
    <property type="term" value="P:DNA-templated transcription"/>
    <property type="evidence" value="ECO:0007669"/>
    <property type="project" value="InterPro"/>
</dbReference>
<dbReference type="GO" id="GO:0019079">
    <property type="term" value="P:viral genome replication"/>
    <property type="evidence" value="ECO:0007669"/>
    <property type="project" value="InterPro"/>
</dbReference>
<dbReference type="CDD" id="cd21031">
    <property type="entry name" value="MEV_P-protein-C_like"/>
    <property type="match status" value="1"/>
</dbReference>
<dbReference type="Gene3D" id="1.20.5.110">
    <property type="match status" value="1"/>
</dbReference>
<dbReference type="Gene3D" id="1.10.8.10">
    <property type="entry name" value="DNA helicase RuvA subunit, C-terminal domain"/>
    <property type="match status" value="1"/>
</dbReference>
<dbReference type="InterPro" id="IPR004897">
    <property type="entry name" value="P/V_Pprotein_paramyxoviral"/>
</dbReference>
<dbReference type="InterPro" id="IPR028243">
    <property type="entry name" value="Paramyxo_P/V_N"/>
</dbReference>
<dbReference type="InterPro" id="IPR016075">
    <property type="entry name" value="RNA_pol_Pprot-P_XD_paramyxovir"/>
</dbReference>
<dbReference type="Pfam" id="PF03210">
    <property type="entry name" value="Paramyx_P_V_C"/>
    <property type="match status" value="1"/>
</dbReference>
<dbReference type="Pfam" id="PF13825">
    <property type="entry name" value="Paramyxo_P_V_N"/>
    <property type="match status" value="1"/>
</dbReference>
<dbReference type="SUPFAM" id="SSF101089">
    <property type="entry name" value="Phosphoprotein XD domain"/>
    <property type="match status" value="1"/>
</dbReference>
<protein>
    <recommendedName>
        <fullName>Phosphoprotein</fullName>
    </recommendedName>
</protein>
<accession>Q77M42</accession>